<protein>
    <recommendedName>
        <fullName>Insertion element IS1 5 protein InsA</fullName>
    </recommendedName>
    <alternativeName>
        <fullName>IS1h</fullName>
    </alternativeName>
</protein>
<comment type="function">
    <text>Absolutely required for transposition of IS1.</text>
</comment>
<comment type="similarity">
    <text evidence="1">Belongs to the IS1 elements InsA family.</text>
</comment>
<comment type="caution">
    <text evidence="1">There is no equivalent of this gene in strain K12 / W3110.</text>
</comment>
<gene>
    <name type="primary">insA5</name>
    <name type="ordered locus">b1894</name>
</gene>
<proteinExistence type="inferred from homology"/>
<feature type="chain" id="PRO_0000393353" description="Insertion element IS1 5 protein InsA">
    <location>
        <begin position="1"/>
        <end position="91"/>
    </location>
</feature>
<sequence>MASVSISCPSCSATDGVVRNGKSTAGHQRYLCSHCRKTWQLQFTYTASQPGTHQKIIDMAMNGVGCRATARIMGVGLNTILRHLKNSGRSR</sequence>
<keyword id="KW-0233">DNA recombination</keyword>
<keyword id="KW-1185">Reference proteome</keyword>
<keyword id="KW-0814">Transposable element</keyword>
<keyword id="KW-0815">Transposition</keyword>
<name>INSA5_ECOLI</name>
<dbReference type="EMBL" id="U00096">
    <property type="protein sequence ID" value="AAC74964.1"/>
    <property type="molecule type" value="Genomic_DNA"/>
</dbReference>
<dbReference type="RefSeq" id="NP_416408.1">
    <property type="nucleotide sequence ID" value="NC_000913.3"/>
</dbReference>
<dbReference type="SMR" id="P0CF11"/>
<dbReference type="FunCoup" id="P0CF11">
    <property type="interactions" value="10"/>
</dbReference>
<dbReference type="DNASU" id="948449"/>
<dbReference type="EnsemblBacteria" id="AAC74964">
    <property type="protein sequence ID" value="AAC74964"/>
    <property type="gene ID" value="b1894"/>
</dbReference>
<dbReference type="GeneID" id="945800"/>
<dbReference type="KEGG" id="eco:b0022"/>
<dbReference type="KEGG" id="eco:b1894"/>
<dbReference type="KEGG" id="eco:b3444"/>
<dbReference type="KEGG" id="ecoc:C3026_00105"/>
<dbReference type="EchoBASE" id="EB4757"/>
<dbReference type="InParanoid" id="P0CF11"/>
<dbReference type="OMA" id="HCKSEDL"/>
<dbReference type="PhylomeDB" id="P0CF11"/>
<dbReference type="BioCyc" id="EcoCyc:MONOMER0-4225"/>
<dbReference type="PRO" id="PR:P0CF11"/>
<dbReference type="Proteomes" id="UP000000625">
    <property type="component" value="Chromosome"/>
</dbReference>
<dbReference type="GO" id="GO:0006313">
    <property type="term" value="P:DNA transposition"/>
    <property type="evidence" value="ECO:0000318"/>
    <property type="project" value="GO_Central"/>
</dbReference>
<dbReference type="InterPro" id="IPR024431">
    <property type="entry name" value="InsA_HTH_dom"/>
</dbReference>
<dbReference type="InterPro" id="IPR003220">
    <property type="entry name" value="InsA_N_dom_Znf"/>
</dbReference>
<dbReference type="InterPro" id="IPR051252">
    <property type="entry name" value="IS1_transposase_InsA"/>
</dbReference>
<dbReference type="PANTHER" id="PTHR47923">
    <property type="entry name" value="INSERTION ELEMENT IS1 1 PROTEIN INSA-RELATED"/>
    <property type="match status" value="1"/>
</dbReference>
<dbReference type="PANTHER" id="PTHR47923:SF1">
    <property type="entry name" value="INSERTION ELEMENT IS1 1 PROTEIN INSA-RELATED"/>
    <property type="match status" value="1"/>
</dbReference>
<dbReference type="Pfam" id="PF12759">
    <property type="entry name" value="HTH_Tnp_IS1"/>
    <property type="match status" value="1"/>
</dbReference>
<dbReference type="Pfam" id="PF03811">
    <property type="entry name" value="Zn_ribbon_InsA"/>
    <property type="match status" value="1"/>
</dbReference>
<reference key="1">
    <citation type="journal article" date="1997" name="Science">
        <title>The complete genome sequence of Escherichia coli K-12.</title>
        <authorList>
            <person name="Blattner F.R."/>
            <person name="Plunkett G. III"/>
            <person name="Bloch C.A."/>
            <person name="Perna N.T."/>
            <person name="Burland V."/>
            <person name="Riley M."/>
            <person name="Collado-Vides J."/>
            <person name="Glasner J.D."/>
            <person name="Rode C.K."/>
            <person name="Mayhew G.F."/>
            <person name="Gregor J."/>
            <person name="Davis N.W."/>
            <person name="Kirkpatrick H.A."/>
            <person name="Goeden M.A."/>
            <person name="Rose D.J."/>
            <person name="Mau B."/>
            <person name="Shao Y."/>
        </authorList>
    </citation>
    <scope>NUCLEOTIDE SEQUENCE [LARGE SCALE GENOMIC DNA]</scope>
    <source>
        <strain>K12 / MG1655 / ATCC 47076</strain>
    </source>
</reference>
<organism>
    <name type="scientific">Escherichia coli (strain K12)</name>
    <dbReference type="NCBI Taxonomy" id="83333"/>
    <lineage>
        <taxon>Bacteria</taxon>
        <taxon>Pseudomonadati</taxon>
        <taxon>Pseudomonadota</taxon>
        <taxon>Gammaproteobacteria</taxon>
        <taxon>Enterobacterales</taxon>
        <taxon>Enterobacteriaceae</taxon>
        <taxon>Escherichia</taxon>
    </lineage>
</organism>
<evidence type="ECO:0000305" key="1"/>
<accession>P0CF11</accession>
<accession>P03827</accession>
<accession>P0ADH0</accession>
<accession>P0C650</accession>
<accession>Q2EER2</accession>
<accession>Q2MCF5</accession>
<accession>Q2MCH2</accession>
<accession>Q933I5</accession>